<name>GNA1_CANAX</name>
<protein>
    <recommendedName>
        <fullName>Glucosamine 6-phosphate N-acetyltransferase</fullName>
        <ecNumber evidence="1">2.3.1.4</ecNumber>
    </recommendedName>
    <alternativeName>
        <fullName>Phosphoglucosamine acetylase</fullName>
    </alternativeName>
    <alternativeName>
        <fullName>Phosphoglucosamine transacetylase</fullName>
    </alternativeName>
</protein>
<accession>O93806</accession>
<proteinExistence type="inferred from homology"/>
<feature type="chain" id="PRO_0000074551" description="Glucosamine 6-phosphate N-acetyltransferase">
    <location>
        <begin position="1"/>
        <end position="149"/>
    </location>
</feature>
<feature type="domain" description="N-acetyltransferase" evidence="2">
    <location>
        <begin position="7"/>
        <end position="149"/>
    </location>
</feature>
<feature type="binding site" evidence="1">
    <location>
        <position position="29"/>
    </location>
    <ligand>
        <name>substrate</name>
    </ligand>
</feature>
<feature type="binding site" evidence="1">
    <location>
        <begin position="76"/>
        <end position="79"/>
    </location>
    <ligand>
        <name>substrate</name>
    </ligand>
</feature>
<feature type="binding site" evidence="1">
    <location>
        <begin position="88"/>
        <end position="90"/>
    </location>
    <ligand>
        <name>substrate</name>
    </ligand>
</feature>
<feature type="binding site" evidence="1">
    <location>
        <begin position="90"/>
        <end position="92"/>
    </location>
    <ligand>
        <name>acetyl-CoA</name>
        <dbReference type="ChEBI" id="CHEBI:57288"/>
    </ligand>
</feature>
<feature type="binding site" evidence="1">
    <location>
        <begin position="98"/>
        <end position="103"/>
    </location>
    <ligand>
        <name>acetyl-CoA</name>
        <dbReference type="ChEBI" id="CHEBI:57288"/>
    </ligand>
</feature>
<feature type="binding site" evidence="1">
    <location>
        <begin position="119"/>
        <end position="120"/>
    </location>
    <ligand>
        <name>substrate</name>
    </ligand>
</feature>
<feature type="binding site" evidence="1">
    <location>
        <position position="124"/>
    </location>
    <ligand>
        <name>substrate</name>
    </ligand>
</feature>
<feature type="binding site" evidence="1">
    <location>
        <begin position="133"/>
        <end position="135"/>
    </location>
    <ligand>
        <name>acetyl-CoA</name>
        <dbReference type="ChEBI" id="CHEBI:57288"/>
    </ligand>
</feature>
<feature type="binding site" evidence="1">
    <location>
        <position position="148"/>
    </location>
    <ligand>
        <name>substrate</name>
    </ligand>
</feature>
<dbReference type="EC" id="2.3.1.4" evidence="1"/>
<dbReference type="EMBL" id="AB017627">
    <property type="protein sequence ID" value="BAA36496.1"/>
    <property type="molecule type" value="Genomic_DNA"/>
</dbReference>
<dbReference type="SMR" id="O93806"/>
<dbReference type="CGD" id="CAL0000198802">
    <property type="gene designation" value="GNA1"/>
</dbReference>
<dbReference type="VEuPathDB" id="FungiDB:C2_03870W_A"/>
<dbReference type="VEuPathDB" id="FungiDB:CAWG_04145"/>
<dbReference type="UniPathway" id="UPA00113">
    <property type="reaction ID" value="UER00529"/>
</dbReference>
<dbReference type="PHI-base" id="PHI:174"/>
<dbReference type="GO" id="GO:0062040">
    <property type="term" value="C:fungal biofilm matrix"/>
    <property type="evidence" value="ECO:0000314"/>
    <property type="project" value="CGD"/>
</dbReference>
<dbReference type="GO" id="GO:0004343">
    <property type="term" value="F:glucosamine 6-phosphate N-acetyltransferase activity"/>
    <property type="evidence" value="ECO:0000315"/>
    <property type="project" value="CGD"/>
</dbReference>
<dbReference type="GO" id="GO:0006048">
    <property type="term" value="P:UDP-N-acetylglucosamine biosynthetic process"/>
    <property type="evidence" value="ECO:0000315"/>
    <property type="project" value="CGD"/>
</dbReference>
<dbReference type="CDD" id="cd04301">
    <property type="entry name" value="NAT_SF"/>
    <property type="match status" value="1"/>
</dbReference>
<dbReference type="FunFam" id="3.40.630.30:FF:000136">
    <property type="entry name" value="Glucosamine 6-phosphate N-acetyltransferase"/>
    <property type="match status" value="1"/>
</dbReference>
<dbReference type="Gene3D" id="3.40.630.30">
    <property type="match status" value="1"/>
</dbReference>
<dbReference type="InterPro" id="IPR016181">
    <property type="entry name" value="Acyl_CoA_acyltransferase"/>
</dbReference>
<dbReference type="InterPro" id="IPR000182">
    <property type="entry name" value="GNAT_dom"/>
</dbReference>
<dbReference type="InterPro" id="IPR039143">
    <property type="entry name" value="GNPNAT1-like"/>
</dbReference>
<dbReference type="PANTHER" id="PTHR13355">
    <property type="entry name" value="GLUCOSAMINE 6-PHOSPHATE N-ACETYLTRANSFERASE"/>
    <property type="match status" value="1"/>
</dbReference>
<dbReference type="PANTHER" id="PTHR13355:SF11">
    <property type="entry name" value="GLUCOSAMINE 6-PHOSPHATE N-ACETYLTRANSFERASE"/>
    <property type="match status" value="1"/>
</dbReference>
<dbReference type="Pfam" id="PF00583">
    <property type="entry name" value="Acetyltransf_1"/>
    <property type="match status" value="1"/>
</dbReference>
<dbReference type="SUPFAM" id="SSF55729">
    <property type="entry name" value="Acyl-CoA N-acyltransferases (Nat)"/>
    <property type="match status" value="1"/>
</dbReference>
<dbReference type="PROSITE" id="PS51186">
    <property type="entry name" value="GNAT"/>
    <property type="match status" value="1"/>
</dbReference>
<organism>
    <name type="scientific">Candida albicans</name>
    <name type="common">Yeast</name>
    <dbReference type="NCBI Taxonomy" id="5476"/>
    <lineage>
        <taxon>Eukaryota</taxon>
        <taxon>Fungi</taxon>
        <taxon>Dikarya</taxon>
        <taxon>Ascomycota</taxon>
        <taxon>Saccharomycotina</taxon>
        <taxon>Pichiomycetes</taxon>
        <taxon>Debaryomycetaceae</taxon>
        <taxon>Candida/Lodderomyces clade</taxon>
        <taxon>Candida</taxon>
    </lineage>
</organism>
<comment type="catalytic activity">
    <reaction evidence="1">
        <text>D-glucosamine 6-phosphate + acetyl-CoA = N-acetyl-D-glucosamine 6-phosphate + CoA + H(+)</text>
        <dbReference type="Rhea" id="RHEA:10292"/>
        <dbReference type="ChEBI" id="CHEBI:15378"/>
        <dbReference type="ChEBI" id="CHEBI:57287"/>
        <dbReference type="ChEBI" id="CHEBI:57288"/>
        <dbReference type="ChEBI" id="CHEBI:57513"/>
        <dbReference type="ChEBI" id="CHEBI:58725"/>
        <dbReference type="EC" id="2.3.1.4"/>
    </reaction>
</comment>
<comment type="pathway">
    <text>Nucleotide-sugar biosynthesis; UDP-N-acetyl-alpha-D-glucosamine biosynthesis; N-acetyl-alpha-D-glucosamine 1-phosphate from alpha-D-glucosamine 6-phosphate (route I): step 1/2.</text>
</comment>
<comment type="similarity">
    <text evidence="3">Belongs to the acetyltransferase family. GNA1 subfamily.</text>
</comment>
<keyword id="KW-0012">Acyltransferase</keyword>
<keyword id="KW-0808">Transferase</keyword>
<evidence type="ECO:0000250" key="1">
    <source>
        <dbReference type="UniProtKB" id="P43577"/>
    </source>
</evidence>
<evidence type="ECO:0000255" key="2">
    <source>
        <dbReference type="PROSITE-ProRule" id="PRU00532"/>
    </source>
</evidence>
<evidence type="ECO:0000305" key="3"/>
<reference key="1">
    <citation type="journal article" date="1999" name="J. Biol. Chem.">
        <title>Saccharomyces cerevisiae GNA1, an essential gene encoding a novel acetyltransferase involved in UDP-N-acetylglucosamine synthesis.</title>
        <authorList>
            <person name="Mio T."/>
            <person name="Yamada-Okabe T."/>
            <person name="Arisawa M."/>
            <person name="Yamada-Okabe H."/>
        </authorList>
    </citation>
    <scope>NUCLEOTIDE SEQUENCE [GENOMIC DNA]</scope>
</reference>
<gene>
    <name type="primary">GNA1</name>
</gene>
<sequence>MMLPQGYTFRKLKLTDYDNQYLETLKVLTTVGEISKEDFTELYNHWSSLPSIYHPYVITNASGIVVATGMLFVEKKLIHECGKVGHIEDISVAKSEQGKKLGYYLVTSLTKVAQENDCYKVILDCSPENVGFYEKCGYKDGGVEMVCRF</sequence>